<organism>
    <name type="scientific">Emericella nidulans (strain FGSC A4 / ATCC 38163 / CBS 112.46 / NRRL 194 / M139)</name>
    <name type="common">Aspergillus nidulans</name>
    <dbReference type="NCBI Taxonomy" id="227321"/>
    <lineage>
        <taxon>Eukaryota</taxon>
        <taxon>Fungi</taxon>
        <taxon>Dikarya</taxon>
        <taxon>Ascomycota</taxon>
        <taxon>Pezizomycotina</taxon>
        <taxon>Eurotiomycetes</taxon>
        <taxon>Eurotiomycetidae</taxon>
        <taxon>Eurotiales</taxon>
        <taxon>Aspergillaceae</taxon>
        <taxon>Aspergillus</taxon>
        <taxon>Aspergillus subgen. Nidulantes</taxon>
    </lineage>
</organism>
<proteinExistence type="inferred from homology"/>
<comment type="catalytic activity">
    <reaction>
        <text>L-glutamate + NADP(+) + H2O = 2-oxoglutarate + NH4(+) + NADPH + H(+)</text>
        <dbReference type="Rhea" id="RHEA:11612"/>
        <dbReference type="ChEBI" id="CHEBI:15377"/>
        <dbReference type="ChEBI" id="CHEBI:15378"/>
        <dbReference type="ChEBI" id="CHEBI:16810"/>
        <dbReference type="ChEBI" id="CHEBI:28938"/>
        <dbReference type="ChEBI" id="CHEBI:29985"/>
        <dbReference type="ChEBI" id="CHEBI:57783"/>
        <dbReference type="ChEBI" id="CHEBI:58349"/>
        <dbReference type="EC" id="1.4.1.4"/>
    </reaction>
</comment>
<comment type="subunit">
    <text>Homohexamer.</text>
</comment>
<comment type="similarity">
    <text evidence="2">Belongs to the Glu/Leu/Phe/Val dehydrogenases family.</text>
</comment>
<feature type="chain" id="PRO_0000182785" description="NADP-specific glutamate dehydrogenase">
    <location>
        <begin position="1"/>
        <end position="459"/>
    </location>
</feature>
<feature type="active site" evidence="1">
    <location>
        <position position="114"/>
    </location>
</feature>
<feature type="sequence conflict" description="In Ref. 1; CAA34252." evidence="2" ref="1">
    <original>E</original>
    <variation>Q</variation>
    <location>
        <position position="206"/>
    </location>
</feature>
<protein>
    <recommendedName>
        <fullName>NADP-specific glutamate dehydrogenase</fullName>
        <shortName>NADP-GDH</shortName>
        <ecNumber>1.4.1.4</ecNumber>
    </recommendedName>
    <alternativeName>
        <fullName>NADP-dependent glutamate dehydrogenase</fullName>
    </alternativeName>
</protein>
<evidence type="ECO:0000255" key="1">
    <source>
        <dbReference type="PROSITE-ProRule" id="PRU10011"/>
    </source>
</evidence>
<evidence type="ECO:0000305" key="2"/>
<dbReference type="EC" id="1.4.1.4"/>
<dbReference type="EMBL" id="X16121">
    <property type="protein sequence ID" value="CAA34252.1"/>
    <property type="molecule type" value="Genomic_DNA"/>
</dbReference>
<dbReference type="EMBL" id="AACD01000076">
    <property type="protein sequence ID" value="EAA60293.1"/>
    <property type="molecule type" value="Genomic_DNA"/>
</dbReference>
<dbReference type="EMBL" id="BN001303">
    <property type="protein sequence ID" value="CBF77653.1"/>
    <property type="molecule type" value="Genomic_DNA"/>
</dbReference>
<dbReference type="PIR" id="S04904">
    <property type="entry name" value="S04904"/>
</dbReference>
<dbReference type="RefSeq" id="XP_661980.1">
    <property type="nucleotide sequence ID" value="XM_656888.1"/>
</dbReference>
<dbReference type="SMR" id="P18819"/>
<dbReference type="FunCoup" id="P18819">
    <property type="interactions" value="765"/>
</dbReference>
<dbReference type="STRING" id="227321.P18819"/>
<dbReference type="EnsemblFungi" id="CBF77653">
    <property type="protein sequence ID" value="CBF77653"/>
    <property type="gene ID" value="ANIA_04376"/>
</dbReference>
<dbReference type="KEGG" id="ani:ANIA_04376"/>
<dbReference type="VEuPathDB" id="FungiDB:AN4376"/>
<dbReference type="eggNOG" id="KOG2250">
    <property type="taxonomic scope" value="Eukaryota"/>
</dbReference>
<dbReference type="HOGENOM" id="CLU_025763_2_1_1"/>
<dbReference type="InParanoid" id="P18819"/>
<dbReference type="OMA" id="MIMGWMM"/>
<dbReference type="OrthoDB" id="6718861at2759"/>
<dbReference type="BRENDA" id="1.4.1.4">
    <property type="organism ID" value="517"/>
</dbReference>
<dbReference type="Proteomes" id="UP000000560">
    <property type="component" value="Chromosome III"/>
</dbReference>
<dbReference type="GO" id="GO:0005829">
    <property type="term" value="C:cytosol"/>
    <property type="evidence" value="ECO:0000314"/>
    <property type="project" value="AspGD"/>
</dbReference>
<dbReference type="GO" id="GO:0005576">
    <property type="term" value="C:extracellular region"/>
    <property type="evidence" value="ECO:0000314"/>
    <property type="project" value="AspGD"/>
</dbReference>
<dbReference type="GO" id="GO:0004354">
    <property type="term" value="F:glutamate dehydrogenase (NADP+) activity"/>
    <property type="evidence" value="ECO:0000315"/>
    <property type="project" value="AspGD"/>
</dbReference>
<dbReference type="GO" id="GO:0097308">
    <property type="term" value="P:cellular response to farnesol"/>
    <property type="evidence" value="ECO:0000270"/>
    <property type="project" value="AspGD"/>
</dbReference>
<dbReference type="GO" id="GO:0006537">
    <property type="term" value="P:glutamate biosynthetic process"/>
    <property type="evidence" value="ECO:0000318"/>
    <property type="project" value="GO_Central"/>
</dbReference>
<dbReference type="CDD" id="cd05313">
    <property type="entry name" value="NAD_bind_2_Glu_DH"/>
    <property type="match status" value="1"/>
</dbReference>
<dbReference type="FunFam" id="1.10.285.10:FF:000001">
    <property type="entry name" value="Glutamate dehydrogenase"/>
    <property type="match status" value="1"/>
</dbReference>
<dbReference type="FunFam" id="1.10.285.10:FF:000003">
    <property type="entry name" value="Glutamate dehydrogenase"/>
    <property type="match status" value="1"/>
</dbReference>
<dbReference type="FunFam" id="3.40.50.10860:FF:000002">
    <property type="entry name" value="Glutamate dehydrogenase"/>
    <property type="match status" value="1"/>
</dbReference>
<dbReference type="FunFam" id="3.40.50.720:FF:000030">
    <property type="entry name" value="Glutamate dehydrogenase"/>
    <property type="match status" value="1"/>
</dbReference>
<dbReference type="Gene3D" id="1.10.285.10">
    <property type="entry name" value="Glutamate Dehydrogenase, chain A, domain 3"/>
    <property type="match status" value="2"/>
</dbReference>
<dbReference type="Gene3D" id="3.40.50.10860">
    <property type="entry name" value="Leucine Dehydrogenase, chain A, domain 1"/>
    <property type="match status" value="1"/>
</dbReference>
<dbReference type="Gene3D" id="3.40.50.720">
    <property type="entry name" value="NAD(P)-binding Rossmann-like Domain"/>
    <property type="match status" value="1"/>
</dbReference>
<dbReference type="InterPro" id="IPR046346">
    <property type="entry name" value="Aminoacid_DH-like_N_sf"/>
</dbReference>
<dbReference type="InterPro" id="IPR006095">
    <property type="entry name" value="Glu/Leu/Phe/Val/Trp_DH"/>
</dbReference>
<dbReference type="InterPro" id="IPR006096">
    <property type="entry name" value="Glu/Leu/Phe/Val/Trp_DH_C"/>
</dbReference>
<dbReference type="InterPro" id="IPR006097">
    <property type="entry name" value="Glu/Leu/Phe/Val/Trp_DH_dimer"/>
</dbReference>
<dbReference type="InterPro" id="IPR033524">
    <property type="entry name" value="Glu/Leu/Phe/Val_DH_AS"/>
</dbReference>
<dbReference type="InterPro" id="IPR014362">
    <property type="entry name" value="Glu_DH"/>
</dbReference>
<dbReference type="InterPro" id="IPR050724">
    <property type="entry name" value="Glu_Leu_Phe_Val_DH"/>
</dbReference>
<dbReference type="InterPro" id="IPR036291">
    <property type="entry name" value="NAD(P)-bd_dom_sf"/>
</dbReference>
<dbReference type="InterPro" id="IPR033922">
    <property type="entry name" value="NAD_bind_Glu_DH"/>
</dbReference>
<dbReference type="NCBIfam" id="NF006929">
    <property type="entry name" value="PRK09414.1"/>
    <property type="match status" value="1"/>
</dbReference>
<dbReference type="PANTHER" id="PTHR43571">
    <property type="entry name" value="NADP-SPECIFIC GLUTAMATE DEHYDROGENASE 1-RELATED"/>
    <property type="match status" value="1"/>
</dbReference>
<dbReference type="PANTHER" id="PTHR43571:SF1">
    <property type="entry name" value="NADP-SPECIFIC GLUTAMATE DEHYDROGENASE 1-RELATED"/>
    <property type="match status" value="1"/>
</dbReference>
<dbReference type="Pfam" id="PF00208">
    <property type="entry name" value="ELFV_dehydrog"/>
    <property type="match status" value="1"/>
</dbReference>
<dbReference type="Pfam" id="PF02812">
    <property type="entry name" value="ELFV_dehydrog_N"/>
    <property type="match status" value="1"/>
</dbReference>
<dbReference type="PIRSF" id="PIRSF000185">
    <property type="entry name" value="Glu_DH"/>
    <property type="match status" value="1"/>
</dbReference>
<dbReference type="PRINTS" id="PR00082">
    <property type="entry name" value="GLFDHDRGNASE"/>
</dbReference>
<dbReference type="SMART" id="SM00839">
    <property type="entry name" value="ELFV_dehydrog"/>
    <property type="match status" value="1"/>
</dbReference>
<dbReference type="SUPFAM" id="SSF53223">
    <property type="entry name" value="Aminoacid dehydrogenase-like, N-terminal domain"/>
    <property type="match status" value="1"/>
</dbReference>
<dbReference type="SUPFAM" id="SSF51735">
    <property type="entry name" value="NAD(P)-binding Rossmann-fold domains"/>
    <property type="match status" value="1"/>
</dbReference>
<dbReference type="PROSITE" id="PS00074">
    <property type="entry name" value="GLFV_DEHYDROGENASE"/>
    <property type="match status" value="1"/>
</dbReference>
<sequence length="459" mass="49609">MSNLPVEPEFEQAYKELASTLENSTLFEQHPEYRRALQVVSVPERVIQFRVVWENDKGEVQINRGYRVQFNSALGPYKGGLRFHPSVNLSILKFLGFEQIFKNALTGLNMGGGKGGSDFDPKGKSDSEIRRFCTAFMTELCKHIGADTDVPAGDIGVTGREVGFLFGQYRRIRNQWEGVLTGKGGSWGGSLIRPEATGYGVVYYVEHMIKHVTGGKESFAGKRVAISGSGNVAQYAALKVIELGGSVVSLSDSKGSLIVKDESASFTPEEIALIADLKVARKQLSELATSSAFAGKFTYIPDARPWTNIPGKFEVALPSATQNEVSGEEAEHLIKSGVRYIAEGSNMGCTQAAIDIFEAHRNANPGDAIWYAPGKAANAGGVAVSGLEMAQNSARLSWTSEEVDARLKGIMEDCFKNGLETAQKFATPAKGVLPSLVTGSNIAGFTKVAEAMKDQGDWW</sequence>
<keyword id="KW-0521">NADP</keyword>
<keyword id="KW-0560">Oxidoreductase</keyword>
<keyword id="KW-1185">Reference proteome</keyword>
<accession>P18819</accession>
<accession>C8V8W7</accession>
<accession>Q5B504</accession>
<gene>
    <name type="primary">gdhA</name>
    <name type="ORF">AN4376</name>
</gene>
<name>DHE4_EMENI</name>
<reference key="1">
    <citation type="journal article" date="1989" name="Mol. Gen. Genet.">
        <title>Nucleotide sequence and regulation of expression of the Aspergillus nidulans gdhA gene encoding NADP dependent glutamate dehydrogenase.</title>
        <authorList>
            <person name="Hawkins A.R."/>
            <person name="Gurr S.J."/>
            <person name="Montague P."/>
            <person name="Kinghorn J.R."/>
        </authorList>
    </citation>
    <scope>NUCLEOTIDE SEQUENCE [GENOMIC DNA]</scope>
</reference>
<reference key="2">
    <citation type="journal article" date="2005" name="Nature">
        <title>Sequencing of Aspergillus nidulans and comparative analysis with A. fumigatus and A. oryzae.</title>
        <authorList>
            <person name="Galagan J.E."/>
            <person name="Calvo S.E."/>
            <person name="Cuomo C."/>
            <person name="Ma L.-J."/>
            <person name="Wortman J.R."/>
            <person name="Batzoglou S."/>
            <person name="Lee S.-I."/>
            <person name="Bastuerkmen M."/>
            <person name="Spevak C.C."/>
            <person name="Clutterbuck J."/>
            <person name="Kapitonov V."/>
            <person name="Jurka J."/>
            <person name="Scazzocchio C."/>
            <person name="Farman M.L."/>
            <person name="Butler J."/>
            <person name="Purcell S."/>
            <person name="Harris S."/>
            <person name="Braus G.H."/>
            <person name="Draht O."/>
            <person name="Busch S."/>
            <person name="D'Enfert C."/>
            <person name="Bouchier C."/>
            <person name="Goldman G.H."/>
            <person name="Bell-Pedersen D."/>
            <person name="Griffiths-Jones S."/>
            <person name="Doonan J.H."/>
            <person name="Yu J."/>
            <person name="Vienken K."/>
            <person name="Pain A."/>
            <person name="Freitag M."/>
            <person name="Selker E.U."/>
            <person name="Archer D.B."/>
            <person name="Penalva M.A."/>
            <person name="Oakley B.R."/>
            <person name="Momany M."/>
            <person name="Tanaka T."/>
            <person name="Kumagai T."/>
            <person name="Asai K."/>
            <person name="Machida M."/>
            <person name="Nierman W.C."/>
            <person name="Denning D.W."/>
            <person name="Caddick M.X."/>
            <person name="Hynes M."/>
            <person name="Paoletti M."/>
            <person name="Fischer R."/>
            <person name="Miller B.L."/>
            <person name="Dyer P.S."/>
            <person name="Sachs M.S."/>
            <person name="Osmani S.A."/>
            <person name="Birren B.W."/>
        </authorList>
    </citation>
    <scope>NUCLEOTIDE SEQUENCE [LARGE SCALE GENOMIC DNA]</scope>
    <source>
        <strain>FGSC A4 / ATCC 38163 / CBS 112.46 / NRRL 194 / M139</strain>
    </source>
</reference>
<reference key="3">
    <citation type="journal article" date="2009" name="Fungal Genet. Biol.">
        <title>The 2008 update of the Aspergillus nidulans genome annotation: a community effort.</title>
        <authorList>
            <person name="Wortman J.R."/>
            <person name="Gilsenan J.M."/>
            <person name="Joardar V."/>
            <person name="Deegan J."/>
            <person name="Clutterbuck J."/>
            <person name="Andersen M.R."/>
            <person name="Archer D."/>
            <person name="Bencina M."/>
            <person name="Braus G."/>
            <person name="Coutinho P."/>
            <person name="von Dohren H."/>
            <person name="Doonan J."/>
            <person name="Driessen A.J."/>
            <person name="Durek P."/>
            <person name="Espeso E."/>
            <person name="Fekete E."/>
            <person name="Flipphi M."/>
            <person name="Estrada C.G."/>
            <person name="Geysens S."/>
            <person name="Goldman G."/>
            <person name="de Groot P.W."/>
            <person name="Hansen K."/>
            <person name="Harris S.D."/>
            <person name="Heinekamp T."/>
            <person name="Helmstaedt K."/>
            <person name="Henrissat B."/>
            <person name="Hofmann G."/>
            <person name="Homan T."/>
            <person name="Horio T."/>
            <person name="Horiuchi H."/>
            <person name="James S."/>
            <person name="Jones M."/>
            <person name="Karaffa L."/>
            <person name="Karanyi Z."/>
            <person name="Kato M."/>
            <person name="Keller N."/>
            <person name="Kelly D.E."/>
            <person name="Kiel J.A."/>
            <person name="Kim J.M."/>
            <person name="van der Klei I.J."/>
            <person name="Klis F.M."/>
            <person name="Kovalchuk A."/>
            <person name="Krasevec N."/>
            <person name="Kubicek C.P."/>
            <person name="Liu B."/>
            <person name="Maccabe A."/>
            <person name="Meyer V."/>
            <person name="Mirabito P."/>
            <person name="Miskei M."/>
            <person name="Mos M."/>
            <person name="Mullins J."/>
            <person name="Nelson D.R."/>
            <person name="Nielsen J."/>
            <person name="Oakley B.R."/>
            <person name="Osmani S.A."/>
            <person name="Pakula T."/>
            <person name="Paszewski A."/>
            <person name="Paulsen I."/>
            <person name="Pilsyk S."/>
            <person name="Pocsi I."/>
            <person name="Punt P.J."/>
            <person name="Ram A.F."/>
            <person name="Ren Q."/>
            <person name="Robellet X."/>
            <person name="Robson G."/>
            <person name="Seiboth B."/>
            <person name="van Solingen P."/>
            <person name="Specht T."/>
            <person name="Sun J."/>
            <person name="Taheri-Talesh N."/>
            <person name="Takeshita N."/>
            <person name="Ussery D."/>
            <person name="vanKuyk P.A."/>
            <person name="Visser H."/>
            <person name="van de Vondervoort P.J."/>
            <person name="de Vries R.P."/>
            <person name="Walton J."/>
            <person name="Xiang X."/>
            <person name="Xiong Y."/>
            <person name="Zeng A.P."/>
            <person name="Brandt B.W."/>
            <person name="Cornell M.J."/>
            <person name="van den Hondel C.A."/>
            <person name="Visser J."/>
            <person name="Oliver S.G."/>
            <person name="Turner G."/>
        </authorList>
    </citation>
    <scope>GENOME REANNOTATION</scope>
    <source>
        <strain>FGSC A4 / ATCC 38163 / CBS 112.46 / NRRL 194 / M139</strain>
    </source>
</reference>